<sequence>MQVNLEDVKIEPSWKEALKGEFLSLYFGDIKEKLICAKRAGIVYPPSNLIFNAFNLTPFDTVKVVILGQDPYHGPNQAMGLSFSVPNGVRIPPSLVNIYKEIYDDLGIREPNSGDLTYWAKQGVLLLNASLTVGANMANSHSGFGWQIFTDAVIKILSRERENIVFLLWGNPAKAKIPLIDTNKHLVLTAAHPSPLARGAFFGCRHFSKTNFYLTQHAKTPIDWDLNNFQI</sequence>
<comment type="function">
    <text evidence="1">Excises uracil residues from the DNA which can arise as a result of misincorporation of dUMP residues by DNA polymerase or due to deamination of cytosine.</text>
</comment>
<comment type="catalytic activity">
    <reaction evidence="1">
        <text>Hydrolyzes single-stranded DNA or mismatched double-stranded DNA and polynucleotides, releasing free uracil.</text>
        <dbReference type="EC" id="3.2.2.27"/>
    </reaction>
</comment>
<comment type="subcellular location">
    <subcellularLocation>
        <location evidence="1">Cytoplasm</location>
    </subcellularLocation>
</comment>
<comment type="similarity">
    <text evidence="1">Belongs to the uracil-DNA glycosylase (UDG) superfamily. UNG family.</text>
</comment>
<dbReference type="EC" id="3.2.2.27" evidence="1"/>
<dbReference type="EMBL" id="CP000767">
    <property type="protein sequence ID" value="EAT99783.1"/>
    <property type="molecule type" value="Genomic_DNA"/>
</dbReference>
<dbReference type="RefSeq" id="WP_009649845.1">
    <property type="nucleotide sequence ID" value="NC_009715.2"/>
</dbReference>
<dbReference type="SMR" id="A7GVX1"/>
<dbReference type="STRING" id="360105.CCV52592_1111"/>
<dbReference type="KEGG" id="ccv:CCV52592_1111"/>
<dbReference type="HOGENOM" id="CLU_032162_3_0_7"/>
<dbReference type="OrthoDB" id="9804372at2"/>
<dbReference type="Proteomes" id="UP000006380">
    <property type="component" value="Chromosome"/>
</dbReference>
<dbReference type="GO" id="GO:0005737">
    <property type="term" value="C:cytoplasm"/>
    <property type="evidence" value="ECO:0007669"/>
    <property type="project" value="UniProtKB-SubCell"/>
</dbReference>
<dbReference type="GO" id="GO:0004844">
    <property type="term" value="F:uracil DNA N-glycosylase activity"/>
    <property type="evidence" value="ECO:0007669"/>
    <property type="project" value="UniProtKB-UniRule"/>
</dbReference>
<dbReference type="GO" id="GO:0097510">
    <property type="term" value="P:base-excision repair, AP site formation via deaminated base removal"/>
    <property type="evidence" value="ECO:0007669"/>
    <property type="project" value="TreeGrafter"/>
</dbReference>
<dbReference type="CDD" id="cd10027">
    <property type="entry name" value="UDG-F1-like"/>
    <property type="match status" value="1"/>
</dbReference>
<dbReference type="FunFam" id="3.40.470.10:FF:000001">
    <property type="entry name" value="Uracil-DNA glycosylase"/>
    <property type="match status" value="1"/>
</dbReference>
<dbReference type="Gene3D" id="3.40.470.10">
    <property type="entry name" value="Uracil-DNA glycosylase-like domain"/>
    <property type="match status" value="1"/>
</dbReference>
<dbReference type="HAMAP" id="MF_00148">
    <property type="entry name" value="UDG"/>
    <property type="match status" value="1"/>
</dbReference>
<dbReference type="InterPro" id="IPR002043">
    <property type="entry name" value="UDG_fam1"/>
</dbReference>
<dbReference type="InterPro" id="IPR018085">
    <property type="entry name" value="Ura-DNA_Glyclase_AS"/>
</dbReference>
<dbReference type="InterPro" id="IPR005122">
    <property type="entry name" value="Uracil-DNA_glycosylase-like"/>
</dbReference>
<dbReference type="InterPro" id="IPR036895">
    <property type="entry name" value="Uracil-DNA_glycosylase-like_sf"/>
</dbReference>
<dbReference type="NCBIfam" id="NF003588">
    <property type="entry name" value="PRK05254.1-1"/>
    <property type="match status" value="1"/>
</dbReference>
<dbReference type="NCBIfam" id="NF003589">
    <property type="entry name" value="PRK05254.1-2"/>
    <property type="match status" value="1"/>
</dbReference>
<dbReference type="NCBIfam" id="NF003591">
    <property type="entry name" value="PRK05254.1-4"/>
    <property type="match status" value="1"/>
</dbReference>
<dbReference type="NCBIfam" id="NF003592">
    <property type="entry name" value="PRK05254.1-5"/>
    <property type="match status" value="1"/>
</dbReference>
<dbReference type="NCBIfam" id="TIGR00628">
    <property type="entry name" value="ung"/>
    <property type="match status" value="1"/>
</dbReference>
<dbReference type="PANTHER" id="PTHR11264">
    <property type="entry name" value="URACIL-DNA GLYCOSYLASE"/>
    <property type="match status" value="1"/>
</dbReference>
<dbReference type="PANTHER" id="PTHR11264:SF0">
    <property type="entry name" value="URACIL-DNA GLYCOSYLASE"/>
    <property type="match status" value="1"/>
</dbReference>
<dbReference type="Pfam" id="PF03167">
    <property type="entry name" value="UDG"/>
    <property type="match status" value="1"/>
</dbReference>
<dbReference type="SMART" id="SM00986">
    <property type="entry name" value="UDG"/>
    <property type="match status" value="1"/>
</dbReference>
<dbReference type="SMART" id="SM00987">
    <property type="entry name" value="UreE_C"/>
    <property type="match status" value="1"/>
</dbReference>
<dbReference type="SUPFAM" id="SSF52141">
    <property type="entry name" value="Uracil-DNA glycosylase-like"/>
    <property type="match status" value="1"/>
</dbReference>
<dbReference type="PROSITE" id="PS00130">
    <property type="entry name" value="U_DNA_GLYCOSYLASE"/>
    <property type="match status" value="1"/>
</dbReference>
<proteinExistence type="inferred from homology"/>
<feature type="chain" id="PRO_1000009872" description="Uracil-DNA glycosylase">
    <location>
        <begin position="1"/>
        <end position="231"/>
    </location>
</feature>
<feature type="active site" description="Proton acceptor" evidence="1">
    <location>
        <position position="70"/>
    </location>
</feature>
<organism>
    <name type="scientific">Campylobacter curvus (strain 525.92)</name>
    <dbReference type="NCBI Taxonomy" id="360105"/>
    <lineage>
        <taxon>Bacteria</taxon>
        <taxon>Pseudomonadati</taxon>
        <taxon>Campylobacterota</taxon>
        <taxon>Epsilonproteobacteria</taxon>
        <taxon>Campylobacterales</taxon>
        <taxon>Campylobacteraceae</taxon>
        <taxon>Campylobacter</taxon>
    </lineage>
</organism>
<keyword id="KW-0963">Cytoplasm</keyword>
<keyword id="KW-0227">DNA damage</keyword>
<keyword id="KW-0234">DNA repair</keyword>
<keyword id="KW-0378">Hydrolase</keyword>
<keyword id="KW-1185">Reference proteome</keyword>
<protein>
    <recommendedName>
        <fullName evidence="1">Uracil-DNA glycosylase</fullName>
        <shortName evidence="1">UDG</shortName>
        <ecNumber evidence="1">3.2.2.27</ecNumber>
    </recommendedName>
</protein>
<accession>A7GVX1</accession>
<gene>
    <name evidence="1" type="primary">ung</name>
    <name type="ordered locus">Ccur92_00590</name>
    <name type="ORF">CCV52592_1111</name>
</gene>
<name>UNG_CAMC5</name>
<evidence type="ECO:0000255" key="1">
    <source>
        <dbReference type="HAMAP-Rule" id="MF_00148"/>
    </source>
</evidence>
<reference key="1">
    <citation type="submission" date="2007-07" db="EMBL/GenBank/DDBJ databases">
        <title>Genome sequence of Campylobacter curvus 525.92 isolated from human feces.</title>
        <authorList>
            <person name="Fouts D.E."/>
            <person name="Mongodin E.F."/>
            <person name="Puiu D."/>
            <person name="Sebastian Y."/>
            <person name="Miller W.G."/>
            <person name="Mandrell R.E."/>
            <person name="Lastovica A.J."/>
            <person name="Nelson K.E."/>
        </authorList>
    </citation>
    <scope>NUCLEOTIDE SEQUENCE [LARGE SCALE GENOMIC DNA]</scope>
    <source>
        <strain>525.92</strain>
    </source>
</reference>